<comment type="function">
    <text evidence="1">An accessory protein needed during the final step in the assembly of 30S ribosomal subunit, possibly for assembly of the head region. Essential for efficient processing of 16S rRNA. May be needed both before and after RbfA during the maturation of 16S rRNA. It has affinity for free ribosomal 30S subunits but not for 70S ribosomes.</text>
</comment>
<comment type="subunit">
    <text evidence="1">Binds ribosomal protein uS19.</text>
</comment>
<comment type="subcellular location">
    <subcellularLocation>
        <location evidence="1">Cytoplasm</location>
    </subcellularLocation>
</comment>
<comment type="domain">
    <text evidence="1">The PRC barrel domain binds ribosomal protein uS19.</text>
</comment>
<comment type="similarity">
    <text evidence="1">Belongs to the RimM family.</text>
</comment>
<reference key="1">
    <citation type="submission" date="2007-02" db="EMBL/GenBank/DDBJ databases">
        <title>Complete sequence of Clostridium thermocellum ATCC 27405.</title>
        <authorList>
            <consortium name="US DOE Joint Genome Institute"/>
            <person name="Copeland A."/>
            <person name="Lucas S."/>
            <person name="Lapidus A."/>
            <person name="Barry K."/>
            <person name="Detter J.C."/>
            <person name="Glavina del Rio T."/>
            <person name="Hammon N."/>
            <person name="Israni S."/>
            <person name="Dalin E."/>
            <person name="Tice H."/>
            <person name="Pitluck S."/>
            <person name="Chertkov O."/>
            <person name="Brettin T."/>
            <person name="Bruce D."/>
            <person name="Han C."/>
            <person name="Tapia R."/>
            <person name="Gilna P."/>
            <person name="Schmutz J."/>
            <person name="Larimer F."/>
            <person name="Land M."/>
            <person name="Hauser L."/>
            <person name="Kyrpides N."/>
            <person name="Mikhailova N."/>
            <person name="Wu J.H.D."/>
            <person name="Newcomb M."/>
            <person name="Richardson P."/>
        </authorList>
    </citation>
    <scope>NUCLEOTIDE SEQUENCE [LARGE SCALE GENOMIC DNA]</scope>
    <source>
        <strain>ATCC 27405 / DSM 1237 / JCM 9322 / NBRC 103400 / NCIMB 10682 / NRRL B-4536 / VPI 7372</strain>
    </source>
</reference>
<protein>
    <recommendedName>
        <fullName evidence="1">Ribosome maturation factor RimM</fullName>
    </recommendedName>
</protein>
<gene>
    <name evidence="1" type="primary">rimM</name>
    <name type="ordered locus">Cthe_0767</name>
</gene>
<accession>A3DDH3</accession>
<name>RIMM_ACET2</name>
<proteinExistence type="inferred from homology"/>
<feature type="chain" id="PRO_1000001166" description="Ribosome maturation factor RimM">
    <location>
        <begin position="1"/>
        <end position="174"/>
    </location>
</feature>
<feature type="domain" description="PRC barrel" evidence="1">
    <location>
        <begin position="96"/>
        <end position="169"/>
    </location>
</feature>
<keyword id="KW-0143">Chaperone</keyword>
<keyword id="KW-0963">Cytoplasm</keyword>
<keyword id="KW-1185">Reference proteome</keyword>
<keyword id="KW-0690">Ribosome biogenesis</keyword>
<keyword id="KW-0698">rRNA processing</keyword>
<sequence>MIQYLQVGKIVNTHGIKGEVKAIPLTDNPRRFNKLKWAYVSKEISNEMPKFDIVSVKHHKNFVILKFSGIDDMNAAEKLKEHFVIIDRKDAVKLPKDTFFICDLIGMNVFDTEEKKLGVLTDVLSTGSNDVYVVKSDNNKEILIPALKSVVKKVCFEDNKMVVDLPQGLIDDEV</sequence>
<evidence type="ECO:0000255" key="1">
    <source>
        <dbReference type="HAMAP-Rule" id="MF_00014"/>
    </source>
</evidence>
<organism>
    <name type="scientific">Acetivibrio thermocellus (strain ATCC 27405 / DSM 1237 / JCM 9322 / NBRC 103400 / NCIMB 10682 / NRRL B-4536 / VPI 7372)</name>
    <name type="common">Clostridium thermocellum</name>
    <dbReference type="NCBI Taxonomy" id="203119"/>
    <lineage>
        <taxon>Bacteria</taxon>
        <taxon>Bacillati</taxon>
        <taxon>Bacillota</taxon>
        <taxon>Clostridia</taxon>
        <taxon>Eubacteriales</taxon>
        <taxon>Oscillospiraceae</taxon>
        <taxon>Acetivibrio</taxon>
    </lineage>
</organism>
<dbReference type="EMBL" id="CP000568">
    <property type="protein sequence ID" value="ABN52002.1"/>
    <property type="molecule type" value="Genomic_DNA"/>
</dbReference>
<dbReference type="RefSeq" id="WP_003516314.1">
    <property type="nucleotide sequence ID" value="NC_009012.1"/>
</dbReference>
<dbReference type="SMR" id="A3DDH3"/>
<dbReference type="STRING" id="203119.Cthe_0767"/>
<dbReference type="GeneID" id="35805897"/>
<dbReference type="KEGG" id="cth:Cthe_0767"/>
<dbReference type="eggNOG" id="COG0806">
    <property type="taxonomic scope" value="Bacteria"/>
</dbReference>
<dbReference type="HOGENOM" id="CLU_077636_3_2_9"/>
<dbReference type="OrthoDB" id="9810331at2"/>
<dbReference type="Proteomes" id="UP000002145">
    <property type="component" value="Chromosome"/>
</dbReference>
<dbReference type="GO" id="GO:0005737">
    <property type="term" value="C:cytoplasm"/>
    <property type="evidence" value="ECO:0007669"/>
    <property type="project" value="UniProtKB-SubCell"/>
</dbReference>
<dbReference type="GO" id="GO:0005840">
    <property type="term" value="C:ribosome"/>
    <property type="evidence" value="ECO:0007669"/>
    <property type="project" value="InterPro"/>
</dbReference>
<dbReference type="GO" id="GO:0043022">
    <property type="term" value="F:ribosome binding"/>
    <property type="evidence" value="ECO:0007669"/>
    <property type="project" value="InterPro"/>
</dbReference>
<dbReference type="GO" id="GO:0042274">
    <property type="term" value="P:ribosomal small subunit biogenesis"/>
    <property type="evidence" value="ECO:0007669"/>
    <property type="project" value="UniProtKB-UniRule"/>
</dbReference>
<dbReference type="GO" id="GO:0006364">
    <property type="term" value="P:rRNA processing"/>
    <property type="evidence" value="ECO:0007669"/>
    <property type="project" value="UniProtKB-UniRule"/>
</dbReference>
<dbReference type="Gene3D" id="2.30.30.240">
    <property type="entry name" value="PRC-barrel domain"/>
    <property type="match status" value="1"/>
</dbReference>
<dbReference type="Gene3D" id="2.40.30.60">
    <property type="entry name" value="RimM"/>
    <property type="match status" value="1"/>
</dbReference>
<dbReference type="HAMAP" id="MF_00014">
    <property type="entry name" value="Ribosome_mat_RimM"/>
    <property type="match status" value="1"/>
</dbReference>
<dbReference type="InterPro" id="IPR011033">
    <property type="entry name" value="PRC_barrel-like_sf"/>
</dbReference>
<dbReference type="InterPro" id="IPR056792">
    <property type="entry name" value="PRC_RimM"/>
</dbReference>
<dbReference type="InterPro" id="IPR011961">
    <property type="entry name" value="RimM"/>
</dbReference>
<dbReference type="InterPro" id="IPR002676">
    <property type="entry name" value="RimM_N"/>
</dbReference>
<dbReference type="InterPro" id="IPR036976">
    <property type="entry name" value="RimM_N_sf"/>
</dbReference>
<dbReference type="InterPro" id="IPR009000">
    <property type="entry name" value="Transl_B-barrel_sf"/>
</dbReference>
<dbReference type="NCBIfam" id="TIGR02273">
    <property type="entry name" value="16S_RimM"/>
    <property type="match status" value="1"/>
</dbReference>
<dbReference type="PANTHER" id="PTHR33692">
    <property type="entry name" value="RIBOSOME MATURATION FACTOR RIMM"/>
    <property type="match status" value="1"/>
</dbReference>
<dbReference type="PANTHER" id="PTHR33692:SF1">
    <property type="entry name" value="RIBOSOME MATURATION FACTOR RIMM"/>
    <property type="match status" value="1"/>
</dbReference>
<dbReference type="Pfam" id="PF24986">
    <property type="entry name" value="PRC_RimM"/>
    <property type="match status" value="1"/>
</dbReference>
<dbReference type="Pfam" id="PF01782">
    <property type="entry name" value="RimM"/>
    <property type="match status" value="1"/>
</dbReference>
<dbReference type="SUPFAM" id="SSF50346">
    <property type="entry name" value="PRC-barrel domain"/>
    <property type="match status" value="1"/>
</dbReference>
<dbReference type="SUPFAM" id="SSF50447">
    <property type="entry name" value="Translation proteins"/>
    <property type="match status" value="1"/>
</dbReference>